<comment type="function">
    <text>Nitrate reductase is a key enzyme involved in the first step of nitrate assimilation in plants, fungi and bacteria.</text>
</comment>
<comment type="catalytic activity">
    <reaction>
        <text>nitrite + NADP(+) + H2O = nitrate + NADPH + H(+)</text>
        <dbReference type="Rhea" id="RHEA:19061"/>
        <dbReference type="ChEBI" id="CHEBI:15377"/>
        <dbReference type="ChEBI" id="CHEBI:15378"/>
        <dbReference type="ChEBI" id="CHEBI:16301"/>
        <dbReference type="ChEBI" id="CHEBI:17632"/>
        <dbReference type="ChEBI" id="CHEBI:57783"/>
        <dbReference type="ChEBI" id="CHEBI:58349"/>
        <dbReference type="EC" id="1.7.1.3"/>
    </reaction>
</comment>
<comment type="cofactor">
    <cofactor evidence="1">
        <name>FAD</name>
        <dbReference type="ChEBI" id="CHEBI:57692"/>
    </cofactor>
    <text evidence="1">Binds 1 FAD per subunit.</text>
</comment>
<comment type="cofactor">
    <cofactor evidence="1">
        <name>heme</name>
        <dbReference type="ChEBI" id="CHEBI:30413"/>
    </cofactor>
    <text evidence="1">Binds 1 heme group per subunit. The heme group is called cytochrome b-557.</text>
</comment>
<comment type="cofactor">
    <cofactor evidence="1">
        <name>Mo-molybdopterin</name>
        <dbReference type="ChEBI" id="CHEBI:71302"/>
    </cofactor>
    <text evidence="1">Binds 1 Mo-molybdopterin (Mo-MPT) cofactor per subunit.</text>
</comment>
<comment type="pathway">
    <text>Nitrogen metabolism; nitrate reduction (assimilation).</text>
</comment>
<comment type="subunit">
    <text evidence="1">Homodimer.</text>
</comment>
<comment type="induction">
    <text>Its expression is highly regulated and responds rapidly to nitrate induction and to ammonium ion repression.</text>
</comment>
<comment type="similarity">
    <text evidence="8">Belongs to the nitrate reductase family.</text>
</comment>
<comment type="sequence caution" evidence="8">
    <conflict type="frameshift">
        <sequence resource="EMBL-CDS" id="CAA47918"/>
    </conflict>
</comment>
<dbReference type="EC" id="1.7.1.3"/>
<dbReference type="EMBL" id="X67687">
    <property type="protein sequence ID" value="CAA47918.1"/>
    <property type="status" value="ALT_FRAME"/>
    <property type="molecule type" value="Genomic_DNA"/>
</dbReference>
<dbReference type="EMBL" id="AJ315577">
    <property type="protein sequence ID" value="CAC41650.1"/>
    <property type="molecule type" value="Genomic_DNA"/>
</dbReference>
<dbReference type="EMBL" id="CM003149">
    <property type="protein sequence ID" value="KIS68266.1"/>
    <property type="molecule type" value="Genomic_DNA"/>
</dbReference>
<dbReference type="PIR" id="JN0804">
    <property type="entry name" value="JN0804"/>
</dbReference>
<dbReference type="RefSeq" id="XP_011390279.1">
    <property type="nucleotide sequence ID" value="XM_011391977.1"/>
</dbReference>
<dbReference type="SMR" id="Q05531"/>
<dbReference type="STRING" id="237631.Q05531"/>
<dbReference type="EnsemblFungi" id="KIS68266">
    <property type="protein sequence ID" value="KIS68266"/>
    <property type="gene ID" value="UMAG_03847"/>
</dbReference>
<dbReference type="GeneID" id="23564194"/>
<dbReference type="KEGG" id="uma:UMAG_03847"/>
<dbReference type="VEuPathDB" id="FungiDB:UMAG_03847"/>
<dbReference type="eggNOG" id="KOG0534">
    <property type="taxonomic scope" value="Eukaryota"/>
</dbReference>
<dbReference type="eggNOG" id="KOG0535">
    <property type="taxonomic scope" value="Eukaryota"/>
</dbReference>
<dbReference type="eggNOG" id="KOG0537">
    <property type="taxonomic scope" value="Eukaryota"/>
</dbReference>
<dbReference type="HOGENOM" id="CLU_003827_4_0_1"/>
<dbReference type="InParanoid" id="Q05531"/>
<dbReference type="OMA" id="KAMMPDY"/>
<dbReference type="OrthoDB" id="432685at2759"/>
<dbReference type="UniPathway" id="UPA00653"/>
<dbReference type="Proteomes" id="UP000000561">
    <property type="component" value="Chromosome 10"/>
</dbReference>
<dbReference type="GO" id="GO:0071949">
    <property type="term" value="F:FAD binding"/>
    <property type="evidence" value="ECO:0000250"/>
    <property type="project" value="UniProtKB"/>
</dbReference>
<dbReference type="GO" id="GO:0020037">
    <property type="term" value="F:heme binding"/>
    <property type="evidence" value="ECO:0007669"/>
    <property type="project" value="InterPro"/>
</dbReference>
<dbReference type="GO" id="GO:0030151">
    <property type="term" value="F:molybdenum ion binding"/>
    <property type="evidence" value="ECO:0000250"/>
    <property type="project" value="UniProtKB"/>
</dbReference>
<dbReference type="GO" id="GO:0043546">
    <property type="term" value="F:molybdopterin cofactor binding"/>
    <property type="evidence" value="ECO:0007669"/>
    <property type="project" value="InterPro"/>
</dbReference>
<dbReference type="GO" id="GO:0050464">
    <property type="term" value="F:nitrate reductase (NADPH) activity"/>
    <property type="evidence" value="ECO:0007669"/>
    <property type="project" value="UniProtKB-EC"/>
</dbReference>
<dbReference type="GO" id="GO:0042128">
    <property type="term" value="P:nitrate assimilation"/>
    <property type="evidence" value="ECO:0007669"/>
    <property type="project" value="UniProtKB-UniPathway"/>
</dbReference>
<dbReference type="CDD" id="cd06183">
    <property type="entry name" value="cyt_b5_reduct_like"/>
    <property type="match status" value="1"/>
</dbReference>
<dbReference type="FunFam" id="2.40.30.10:FF:000021">
    <property type="entry name" value="NADH-cytochrome b5 reductase"/>
    <property type="match status" value="1"/>
</dbReference>
<dbReference type="FunFam" id="2.60.40.650:FF:000010">
    <property type="entry name" value="Nitrate reductase"/>
    <property type="match status" value="1"/>
</dbReference>
<dbReference type="FunFam" id="3.90.420.10:FF:000005">
    <property type="entry name" value="Nitrate reductase"/>
    <property type="match status" value="1"/>
</dbReference>
<dbReference type="FunFam" id="3.40.50.80:FF:000025">
    <property type="entry name" value="Nitrate reductase [NADH]"/>
    <property type="match status" value="1"/>
</dbReference>
<dbReference type="Gene3D" id="2.60.40.650">
    <property type="match status" value="1"/>
</dbReference>
<dbReference type="Gene3D" id="3.10.120.10">
    <property type="entry name" value="Cytochrome b5-like heme/steroid binding domain"/>
    <property type="match status" value="1"/>
</dbReference>
<dbReference type="Gene3D" id="3.40.50.80">
    <property type="entry name" value="Nucleotide-binding domain of ferredoxin-NADP reductase (FNR) module"/>
    <property type="match status" value="1"/>
</dbReference>
<dbReference type="Gene3D" id="3.90.420.10">
    <property type="entry name" value="Oxidoreductase, molybdopterin-binding domain"/>
    <property type="match status" value="1"/>
</dbReference>
<dbReference type="Gene3D" id="2.40.30.10">
    <property type="entry name" value="Translation factors"/>
    <property type="match status" value="1"/>
</dbReference>
<dbReference type="InterPro" id="IPR008333">
    <property type="entry name" value="Cbr1-like_FAD-bd_dom"/>
</dbReference>
<dbReference type="InterPro" id="IPR001199">
    <property type="entry name" value="Cyt_B5-like_heme/steroid-bd"/>
</dbReference>
<dbReference type="InterPro" id="IPR036400">
    <property type="entry name" value="Cyt_B5-like_heme/steroid_sf"/>
</dbReference>
<dbReference type="InterPro" id="IPR018506">
    <property type="entry name" value="Cyt_B5_heme-BS"/>
</dbReference>
<dbReference type="InterPro" id="IPR017927">
    <property type="entry name" value="FAD-bd_FR_type"/>
</dbReference>
<dbReference type="InterPro" id="IPR001709">
    <property type="entry name" value="Flavoprot_Pyr_Nucl_cyt_Rdtase"/>
</dbReference>
<dbReference type="InterPro" id="IPR039261">
    <property type="entry name" value="FNR_nucleotide-bd"/>
</dbReference>
<dbReference type="InterPro" id="IPR014756">
    <property type="entry name" value="Ig_E-set"/>
</dbReference>
<dbReference type="InterPro" id="IPR005066">
    <property type="entry name" value="MoCF_OxRdtse_dimer"/>
</dbReference>
<dbReference type="InterPro" id="IPR008335">
    <property type="entry name" value="Mopterin_OxRdtase_euk"/>
</dbReference>
<dbReference type="InterPro" id="IPR001433">
    <property type="entry name" value="OxRdtase_FAD/NAD-bd"/>
</dbReference>
<dbReference type="InterPro" id="IPR000572">
    <property type="entry name" value="OxRdtase_Mopterin-bd_dom"/>
</dbReference>
<dbReference type="InterPro" id="IPR036374">
    <property type="entry name" value="OxRdtase_Mopterin-bd_sf"/>
</dbReference>
<dbReference type="InterPro" id="IPR022407">
    <property type="entry name" value="OxRdtase_Mopterin_BS"/>
</dbReference>
<dbReference type="InterPro" id="IPR017938">
    <property type="entry name" value="Riboflavin_synthase-like_b-brl"/>
</dbReference>
<dbReference type="PANTHER" id="PTHR19372:SF7">
    <property type="entry name" value="SULFITE OXIDASE, MITOCHONDRIAL"/>
    <property type="match status" value="1"/>
</dbReference>
<dbReference type="PANTHER" id="PTHR19372">
    <property type="entry name" value="SULFITE REDUCTASE"/>
    <property type="match status" value="1"/>
</dbReference>
<dbReference type="Pfam" id="PF00173">
    <property type="entry name" value="Cyt-b5"/>
    <property type="match status" value="1"/>
</dbReference>
<dbReference type="Pfam" id="PF00970">
    <property type="entry name" value="FAD_binding_6"/>
    <property type="match status" value="1"/>
</dbReference>
<dbReference type="Pfam" id="PF03404">
    <property type="entry name" value="Mo-co_dimer"/>
    <property type="match status" value="1"/>
</dbReference>
<dbReference type="Pfam" id="PF00175">
    <property type="entry name" value="NAD_binding_1"/>
    <property type="match status" value="1"/>
</dbReference>
<dbReference type="Pfam" id="PF00174">
    <property type="entry name" value="Oxidored_molyb"/>
    <property type="match status" value="1"/>
</dbReference>
<dbReference type="PRINTS" id="PR00406">
    <property type="entry name" value="CYTB5RDTASE"/>
</dbReference>
<dbReference type="PRINTS" id="PR00363">
    <property type="entry name" value="CYTOCHROMEB5"/>
</dbReference>
<dbReference type="PRINTS" id="PR00407">
    <property type="entry name" value="EUMOPTERIN"/>
</dbReference>
<dbReference type="PRINTS" id="PR00371">
    <property type="entry name" value="FPNCR"/>
</dbReference>
<dbReference type="SMART" id="SM01117">
    <property type="entry name" value="Cyt-b5"/>
    <property type="match status" value="1"/>
</dbReference>
<dbReference type="SUPFAM" id="SSF55856">
    <property type="entry name" value="Cytochrome b5-like heme/steroid binding domain"/>
    <property type="match status" value="1"/>
</dbReference>
<dbReference type="SUPFAM" id="SSF81296">
    <property type="entry name" value="E set domains"/>
    <property type="match status" value="1"/>
</dbReference>
<dbReference type="SUPFAM" id="SSF52343">
    <property type="entry name" value="Ferredoxin reductase-like, C-terminal NADP-linked domain"/>
    <property type="match status" value="1"/>
</dbReference>
<dbReference type="SUPFAM" id="SSF56524">
    <property type="entry name" value="Oxidoreductase molybdopterin-binding domain"/>
    <property type="match status" value="1"/>
</dbReference>
<dbReference type="SUPFAM" id="SSF63380">
    <property type="entry name" value="Riboflavin synthase domain-like"/>
    <property type="match status" value="1"/>
</dbReference>
<dbReference type="PROSITE" id="PS00191">
    <property type="entry name" value="CYTOCHROME_B5_1"/>
    <property type="match status" value="1"/>
</dbReference>
<dbReference type="PROSITE" id="PS50255">
    <property type="entry name" value="CYTOCHROME_B5_2"/>
    <property type="match status" value="1"/>
</dbReference>
<dbReference type="PROSITE" id="PS51384">
    <property type="entry name" value="FAD_FR"/>
    <property type="match status" value="1"/>
</dbReference>
<dbReference type="PROSITE" id="PS00559">
    <property type="entry name" value="MOLYBDOPTERIN_EUK"/>
    <property type="match status" value="1"/>
</dbReference>
<accession>Q05531</accession>
<accession>A0A0D1DXC6</accession>
<accession>Q4P7R6</accession>
<accession>Q96VE8</accession>
<sequence>MTISTTSSSTSSKTSSEKGDDLKGFSSSSSPASSRSSSATTPEPSSPTVLAAKTIESIDPFQPRKDYNENVLPAIPATEAVQPLTSDANTPDHWIARDERMIRLTGKHPFNSEAPLSELFSKGFLTPQNLFYVRSHGDTPRVTREQAENWKLKVHGLVEQEVELSIKDLKEKFPTVTLPITLVCAGNRRKEQNMVAKGLGFNWGAAGVSTGLFTGVYLADILDYCKPKNPLLSSFPSYDVAVPGRARHVVFEGADELPKGKYGTSQRLNWALDRCKGMLIAWGLNGEDLSPDHGYPLRLVVPGQIGGRMVKWLERIEVSDRESQHHLHFHDNKVLPTEVTADQARSEMHWWYDPKYIINDLNVNAAICSPDHDQVVNVAEPSTSSPQMLPLEGYAYTGGGRRIHRVEISLDDGHSWKCASIHYPEDLYRMYPIQGHEYFGTLDLSATEMSFSWCFWRLDVDVQADIIAKDVKVISVRALDEGLATMPRDMYWNATSMMNSWWFRVAVHREGENGNQIRFEHPTLAGNAPGGWMQRMNEAGLNPRYPQFGEAKAVESCKTDANTLAAAKEAKVDPKAIMIDPSKADTIITAADLAAHGDGEGPEPWFVVHGHVYDGTGFLKDHPGGDQSIRLVAGEDATEDFMAIHSMDAKKMLRDFHLGRLEKQDAAPPAATTEGEVLDLSKPFLDPKKWRATRLVSKQIISPDARIFRFALGSEDQELGLPVGQHVFVRVRSKNARTGETEMVQRAYTPYSGNTQRGFLDILIKVYFPSDAAATSAPAFEGGKMTMLLEKIDVSSPSDDLTIELKGPLGSFTYLGQQQIRWKPASAVRRVRKLAMIAGGSGITPIWSTLKAIADEVLDASNPSSPALDPIQIWIVYGNRTEQDILIREELERLRVALKGNLKVWHVLSNCTPENEANWSMGRGHITANVLRTHLPPPPAKPASEDELEDTLALVCGPPPMEKAVSDGLKQLGWDLQRCVVFF</sequence>
<reference key="1">
    <citation type="journal article" date="1993" name="Gene">
        <title>The Ustilago maydis nar1 gene encoding nitrate reductase activity: sequence and transcriptional regulation.</title>
        <authorList>
            <person name="Banks G.R."/>
            <person name="Holden D.W."/>
            <person name="Kanuga N."/>
            <person name="Shelton P."/>
            <person name="Spanos A."/>
        </authorList>
    </citation>
    <scope>NUCLEOTIDE SEQUENCE [GENOMIC DNA]</scope>
    <source>
        <strain>DSM 14603 / FGSC 9021 / UM521</strain>
    </source>
</reference>
<reference key="2">
    <citation type="journal article" date="2001" name="Mol. Microbiol.">
        <title>Identification of genes in the bW/bE regulatory cascade in Ustilago maydis.</title>
        <authorList>
            <person name="Brachmann A."/>
            <person name="Weinzierl G."/>
            <person name="Kaemper J."/>
            <person name="Kahmann R."/>
        </authorList>
    </citation>
    <scope>NUCLEOTIDE SEQUENCE [GENOMIC DNA]</scope>
    <source>
        <strain>FBD11</strain>
    </source>
</reference>
<reference key="3">
    <citation type="journal article" date="2006" name="Nature">
        <title>Insights from the genome of the biotrophic fungal plant pathogen Ustilago maydis.</title>
        <authorList>
            <person name="Kaemper J."/>
            <person name="Kahmann R."/>
            <person name="Boelker M."/>
            <person name="Ma L.-J."/>
            <person name="Brefort T."/>
            <person name="Saville B.J."/>
            <person name="Banuett F."/>
            <person name="Kronstad J.W."/>
            <person name="Gold S.E."/>
            <person name="Mueller O."/>
            <person name="Perlin M.H."/>
            <person name="Woesten H.A.B."/>
            <person name="de Vries R."/>
            <person name="Ruiz-Herrera J."/>
            <person name="Reynaga-Pena C.G."/>
            <person name="Snetselaar K."/>
            <person name="McCann M."/>
            <person name="Perez-Martin J."/>
            <person name="Feldbruegge M."/>
            <person name="Basse C.W."/>
            <person name="Steinberg G."/>
            <person name="Ibeas J.I."/>
            <person name="Holloman W."/>
            <person name="Guzman P."/>
            <person name="Farman M.L."/>
            <person name="Stajich J.E."/>
            <person name="Sentandreu R."/>
            <person name="Gonzalez-Prieto J.M."/>
            <person name="Kennell J.C."/>
            <person name="Molina L."/>
            <person name="Schirawski J."/>
            <person name="Mendoza-Mendoza A."/>
            <person name="Greilinger D."/>
            <person name="Muench K."/>
            <person name="Roessel N."/>
            <person name="Scherer M."/>
            <person name="Vranes M."/>
            <person name="Ladendorf O."/>
            <person name="Vincon V."/>
            <person name="Fuchs U."/>
            <person name="Sandrock B."/>
            <person name="Meng S."/>
            <person name="Ho E.C.H."/>
            <person name="Cahill M.J."/>
            <person name="Boyce K.J."/>
            <person name="Klose J."/>
            <person name="Klosterman S.J."/>
            <person name="Deelstra H.J."/>
            <person name="Ortiz-Castellanos L."/>
            <person name="Li W."/>
            <person name="Sanchez-Alonso P."/>
            <person name="Schreier P.H."/>
            <person name="Haeuser-Hahn I."/>
            <person name="Vaupel M."/>
            <person name="Koopmann E."/>
            <person name="Friedrich G."/>
            <person name="Voss H."/>
            <person name="Schlueter T."/>
            <person name="Margolis J."/>
            <person name="Platt D."/>
            <person name="Swimmer C."/>
            <person name="Gnirke A."/>
            <person name="Chen F."/>
            <person name="Vysotskaia V."/>
            <person name="Mannhaupt G."/>
            <person name="Gueldener U."/>
            <person name="Muensterkoetter M."/>
            <person name="Haase D."/>
            <person name="Oesterheld M."/>
            <person name="Mewes H.-W."/>
            <person name="Mauceli E.W."/>
            <person name="DeCaprio D."/>
            <person name="Wade C.M."/>
            <person name="Butler J."/>
            <person name="Young S.K."/>
            <person name="Jaffe D.B."/>
            <person name="Calvo S.E."/>
            <person name="Nusbaum C."/>
            <person name="Galagan J.E."/>
            <person name="Birren B.W."/>
        </authorList>
    </citation>
    <scope>NUCLEOTIDE SEQUENCE [LARGE SCALE GENOMIC DNA]</scope>
    <source>
        <strain>DSM 14603 / FGSC 9021 / UM521</strain>
    </source>
</reference>
<reference key="4">
    <citation type="submission" date="2014-09" db="EMBL/GenBank/DDBJ databases">
        <authorList>
            <person name="Gueldener U."/>
            <person name="Muensterkoetter M."/>
            <person name="Walter M.C."/>
            <person name="Mannhaupt G."/>
            <person name="Kahmann R."/>
        </authorList>
    </citation>
    <scope>GENOME REANNOTATION</scope>
    <source>
        <strain>DSM 14603 / FGSC 9021 / UM521</strain>
    </source>
</reference>
<name>NIA_MYCMD</name>
<proteinExistence type="evidence at transcript level"/>
<evidence type="ECO:0000250" key="1"/>
<evidence type="ECO:0000250" key="2">
    <source>
        <dbReference type="UniProtKB" id="A0A286R227"/>
    </source>
</evidence>
<evidence type="ECO:0000250" key="3">
    <source>
        <dbReference type="UniProtKB" id="P17571"/>
    </source>
</evidence>
<evidence type="ECO:0000250" key="4">
    <source>
        <dbReference type="UniProtKB" id="P49050"/>
    </source>
</evidence>
<evidence type="ECO:0000255" key="5">
    <source>
        <dbReference type="PROSITE-ProRule" id="PRU00279"/>
    </source>
</evidence>
<evidence type="ECO:0000255" key="6">
    <source>
        <dbReference type="PROSITE-ProRule" id="PRU00716"/>
    </source>
</evidence>
<evidence type="ECO:0000256" key="7">
    <source>
        <dbReference type="SAM" id="MobiDB-lite"/>
    </source>
</evidence>
<evidence type="ECO:0000305" key="8"/>
<feature type="chain" id="PRO_0000166048" description="Nitrate reductase [NADPH]">
    <location>
        <begin position="1"/>
        <end position="983"/>
    </location>
</feature>
<feature type="domain" description="Cytochrome b5 heme-binding" evidence="5">
    <location>
        <begin position="585"/>
        <end position="662"/>
    </location>
</feature>
<feature type="domain" description="FAD-binding FR-type" evidence="6">
    <location>
        <begin position="688"/>
        <end position="815"/>
    </location>
</feature>
<feature type="region of interest" description="Disordered" evidence="7">
    <location>
        <begin position="1"/>
        <end position="50"/>
    </location>
</feature>
<feature type="compositionally biased region" description="Low complexity" evidence="7">
    <location>
        <begin position="1"/>
        <end position="14"/>
    </location>
</feature>
<feature type="compositionally biased region" description="Low complexity" evidence="7">
    <location>
        <begin position="26"/>
        <end position="48"/>
    </location>
</feature>
<feature type="binding site" evidence="4">
    <location>
        <position position="184"/>
    </location>
    <ligand>
        <name>Mo-molybdopterin</name>
        <dbReference type="ChEBI" id="CHEBI:71302"/>
    </ligand>
    <ligandPart>
        <name>Mo</name>
        <dbReference type="ChEBI" id="CHEBI:28685"/>
    </ligandPart>
</feature>
<feature type="binding site" description="axial binding residue" evidence="5">
    <location>
        <position position="622"/>
    </location>
    <ligand>
        <name>heme</name>
        <dbReference type="ChEBI" id="CHEBI:30413"/>
    </ligand>
    <ligandPart>
        <name>Fe</name>
        <dbReference type="ChEBI" id="CHEBI:18248"/>
    </ligandPart>
</feature>
<feature type="binding site" description="axial binding residue" evidence="5">
    <location>
        <position position="645"/>
    </location>
    <ligand>
        <name>heme</name>
        <dbReference type="ChEBI" id="CHEBI:30413"/>
    </ligand>
    <ligandPart>
        <name>Fe</name>
        <dbReference type="ChEBI" id="CHEBI:18248"/>
    </ligandPart>
</feature>
<feature type="binding site" evidence="2">
    <location>
        <begin position="746"/>
        <end position="749"/>
    </location>
    <ligand>
        <name>FAD</name>
        <dbReference type="ChEBI" id="CHEBI:57692"/>
    </ligand>
</feature>
<feature type="binding site" evidence="2">
    <location>
        <begin position="763"/>
        <end position="767"/>
    </location>
    <ligand>
        <name>FAD</name>
        <dbReference type="ChEBI" id="CHEBI:57692"/>
    </ligand>
</feature>
<feature type="binding site" evidence="3">
    <location>
        <position position="768"/>
    </location>
    <ligand>
        <name>FAD</name>
        <dbReference type="ChEBI" id="CHEBI:57692"/>
    </ligand>
</feature>
<feature type="binding site" evidence="2">
    <location>
        <position position="780"/>
    </location>
    <ligand>
        <name>FAD</name>
        <dbReference type="ChEBI" id="CHEBI:57692"/>
    </ligand>
</feature>
<feature type="binding site" evidence="2">
    <location>
        <begin position="784"/>
        <end position="786"/>
    </location>
    <ligand>
        <name>FAD</name>
        <dbReference type="ChEBI" id="CHEBI:57692"/>
    </ligand>
</feature>
<feature type="binding site" evidence="3">
    <location>
        <position position="841"/>
    </location>
    <ligand>
        <name>FAD</name>
        <dbReference type="ChEBI" id="CHEBI:57692"/>
    </ligand>
</feature>
<feature type="binding site" evidence="2">
    <location>
        <position position="844"/>
    </location>
    <ligand>
        <name>FAD</name>
        <dbReference type="ChEBI" id="CHEBI:57692"/>
    </ligand>
</feature>
<feature type="binding site" evidence="1">
    <location>
        <begin position="952"/>
        <end position="961"/>
    </location>
    <ligand>
        <name>NADP(+)</name>
        <dbReference type="ChEBI" id="CHEBI:58349"/>
    </ligand>
</feature>
<feature type="sequence conflict" description="In Ref. 1; CAA47918." evidence="8" ref="1">
    <original>T</original>
    <variation>S</variation>
    <location>
        <position position="5"/>
    </location>
</feature>
<feature type="sequence conflict" description="In Ref. 1; CAA47918." evidence="8" ref="1">
    <original>KGD</original>
    <variation>NP</variation>
    <location>
        <begin position="18"/>
        <end position="20"/>
    </location>
</feature>
<feature type="sequence conflict" description="In Ref. 1; CAA47918." evidence="8" ref="1">
    <original>V</original>
    <variation>I</variation>
    <location>
        <position position="49"/>
    </location>
</feature>
<feature type="sequence conflict" description="In Ref. 1; CAA47918." evidence="8" ref="1">
    <original>H</original>
    <variation>Q</variation>
    <location>
        <position position="136"/>
    </location>
</feature>
<feature type="sequence conflict" description="In Ref. 1; CAA47918." evidence="8" ref="1">
    <original>LP</original>
    <variation>PT</variation>
    <location>
        <begin position="178"/>
        <end position="179"/>
    </location>
</feature>
<feature type="sequence conflict" description="In Ref. 1; CAA47918." evidence="8" ref="1">
    <original>PG</original>
    <variation>LD</variation>
    <location>
        <begin position="243"/>
        <end position="244"/>
    </location>
</feature>
<feature type="sequence conflict" description="In Ref. 1; CAA47918." evidence="8" ref="1">
    <original>G</original>
    <variation>S</variation>
    <location>
        <position position="306"/>
    </location>
</feature>
<feature type="sequence conflict" description="In Ref. 1; CAA47918." evidence="8" ref="1">
    <original>K</original>
    <variation>Q</variation>
    <location>
        <position position="333"/>
    </location>
</feature>
<feature type="sequence conflict" description="In Ref. 1; CAA47918." evidence="8" ref="1">
    <original>A</original>
    <variation>S</variation>
    <location>
        <position position="365"/>
    </location>
</feature>
<feature type="sequence conflict" description="In Ref. 1; CAA47918." evidence="8" ref="1">
    <original>Q</original>
    <variation>E</variation>
    <location>
        <position position="387"/>
    </location>
</feature>
<feature type="sequence conflict" description="In Ref. 1; CAA47918." evidence="8" ref="1">
    <original>H</original>
    <variation>R</variation>
    <location>
        <position position="414"/>
    </location>
</feature>
<feature type="sequence conflict" description="In Ref. 1; CAA47918." evidence="8" ref="1">
    <original>Q</original>
    <variation>E</variation>
    <location>
        <position position="463"/>
    </location>
</feature>
<feature type="sequence conflict" description="In Ref. 1; CAA47918." evidence="8" ref="1">
    <original>G</original>
    <variation>V</variation>
    <location>
        <position position="482"/>
    </location>
</feature>
<feature type="sequence conflict" description="In Ref. 1; CAA47918." evidence="8" ref="1">
    <original>M</original>
    <variation>Q</variation>
    <location>
        <position position="486"/>
    </location>
</feature>
<feature type="sequence conflict" description="In Ref. 1; CAA47918." evidence="8" ref="1">
    <location>
        <position position="506"/>
    </location>
</feature>
<feature type="sequence conflict" description="In Ref. 1; CAA47918." evidence="8" ref="1">
    <original>G</original>
    <variation>V</variation>
    <location>
        <position position="549"/>
    </location>
</feature>
<feature type="sequence conflict" description="In Ref. 1; CAA47918." evidence="8" ref="1">
    <original>VD</original>
    <variation>WV</variation>
    <location>
        <begin position="572"/>
        <end position="573"/>
    </location>
</feature>
<feature type="sequence conflict" description="In Ref. 1; CAA47918." evidence="8" ref="1">
    <original>V</original>
    <variation>L</variation>
    <location>
        <position position="612"/>
    </location>
</feature>
<feature type="sequence conflict" description="In Ref. 1; CAA47918." evidence="8" ref="1">
    <original>D</original>
    <variation>DD</variation>
    <location>
        <position position="636"/>
    </location>
</feature>
<feature type="sequence conflict" description="In Ref. 1; CAA47918." evidence="8" ref="1">
    <original>TEG</original>
    <variation>ER</variation>
    <location>
        <begin position="673"/>
        <end position="675"/>
    </location>
</feature>
<feature type="sequence conflict" description="In Ref. 1; CAA47918." evidence="8" ref="1">
    <original>HVFVRVRS</original>
    <variation>QLCVCRL</variation>
    <location>
        <begin position="726"/>
        <end position="733"/>
    </location>
</feature>
<feature type="sequence conflict" description="In Ref. 1; CAA47918." evidence="8" ref="1">
    <original>T</original>
    <variation>A</variation>
    <location>
        <position position="741"/>
    </location>
</feature>
<feature type="sequence conflict" description="In Ref. 1; CAA47918." evidence="8" ref="1">
    <original>LR</original>
    <variation>M</variation>
    <location>
        <begin position="894"/>
        <end position="895"/>
    </location>
</feature>
<feature type="sequence conflict" description="In Ref. 1; CAA47918." evidence="8" ref="1">
    <original>T</original>
    <variation>S</variation>
    <location>
        <position position="927"/>
    </location>
</feature>
<feature type="sequence conflict" description="In Ref. 1; CAA47918." evidence="8" ref="1">
    <original>KQ</original>
    <variation>NE</variation>
    <location>
        <begin position="970"/>
        <end position="971"/>
    </location>
</feature>
<gene>
    <name type="primary">NAR1</name>
    <name type="ORF">UMAG_03847</name>
</gene>
<protein>
    <recommendedName>
        <fullName>Nitrate reductase [NADPH]</fullName>
        <shortName>NR</shortName>
        <ecNumber>1.7.1.3</ecNumber>
    </recommendedName>
</protein>
<keyword id="KW-0274">FAD</keyword>
<keyword id="KW-0285">Flavoprotein</keyword>
<keyword id="KW-0349">Heme</keyword>
<keyword id="KW-0408">Iron</keyword>
<keyword id="KW-0479">Metal-binding</keyword>
<keyword id="KW-0500">Molybdenum</keyword>
<keyword id="KW-0521">NADP</keyword>
<keyword id="KW-0534">Nitrate assimilation</keyword>
<keyword id="KW-0560">Oxidoreductase</keyword>
<keyword id="KW-1185">Reference proteome</keyword>
<organism>
    <name type="scientific">Mycosarcoma maydis</name>
    <name type="common">Corn smut fungus</name>
    <name type="synonym">Ustilago maydis</name>
    <dbReference type="NCBI Taxonomy" id="5270"/>
    <lineage>
        <taxon>Eukaryota</taxon>
        <taxon>Fungi</taxon>
        <taxon>Dikarya</taxon>
        <taxon>Basidiomycota</taxon>
        <taxon>Ustilaginomycotina</taxon>
        <taxon>Ustilaginomycetes</taxon>
        <taxon>Ustilaginales</taxon>
        <taxon>Ustilaginaceae</taxon>
        <taxon>Mycosarcoma</taxon>
    </lineage>
</organism>